<organism>
    <name type="scientific">Bordetella pertussis</name>
    <dbReference type="NCBI Taxonomy" id="520"/>
    <lineage>
        <taxon>Bacteria</taxon>
        <taxon>Pseudomonadati</taxon>
        <taxon>Pseudomonadota</taxon>
        <taxon>Betaproteobacteria</taxon>
        <taxon>Burkholderiales</taxon>
        <taxon>Alcaligenaceae</taxon>
        <taxon>Bordetella</taxon>
    </lineage>
</organism>
<name>KDTA_BORPT</name>
<gene>
    <name type="primary">waaA</name>
</gene>
<sequence>MGRGVYTLALRGLAPLIWLWMWRRARRAGGQWELFAPARFGRAGARAPAPLAAPVWVHAVSLGETRAAQPLVQALLERGLPVLLTHTTATGRAEGERLFGAAIGRGQLQQAWLPYDFPGATRRFLARHAPRCGLLMEREVWPNLLAAARAQGVPMALVSARFSASSLRQAGWLGQALREALAGLDRVLAQTDEDGARLCQAGANAYTVTGSLKFDVALPEAQLRVGHAWAGATGRPVIALASTREGEDAMFIEAIGALQAHRAATPRPLILLIPRHPQRFDEAAAQLQAAGLAYARRSAGSGEPGPHIDVLLGDTLGEMPFYYAAADVAIVGGSFARLGGQNLIEACAAGTPVIVGPHTFNFKDAARDAIAAGAALRAPDARTALDWALQLLAEPARRQAMSEAARAWTAAHAGATRRTLDALEDWLG</sequence>
<dbReference type="EC" id="2.4.99.12" evidence="2"/>
<dbReference type="EMBL" id="X90711">
    <property type="protein sequence ID" value="CAA62243.1"/>
    <property type="molecule type" value="Genomic_DNA"/>
</dbReference>
<dbReference type="PIR" id="S70670">
    <property type="entry name" value="S70670"/>
</dbReference>
<dbReference type="RefSeq" id="WP_010929616.1">
    <property type="nucleotide sequence ID" value="NZ_UIGD01000005.1"/>
</dbReference>
<dbReference type="SMR" id="Q45374"/>
<dbReference type="CAZy" id="GT30">
    <property type="family name" value="Glycosyltransferase Family 30"/>
</dbReference>
<dbReference type="OMA" id="FIKYEFW"/>
<dbReference type="UniPathway" id="UPA00958"/>
<dbReference type="GO" id="GO:0005886">
    <property type="term" value="C:plasma membrane"/>
    <property type="evidence" value="ECO:0007669"/>
    <property type="project" value="UniProtKB-SubCell"/>
</dbReference>
<dbReference type="GO" id="GO:0043842">
    <property type="term" value="F:Kdo transferase activity"/>
    <property type="evidence" value="ECO:0007669"/>
    <property type="project" value="UniProtKB-EC"/>
</dbReference>
<dbReference type="GO" id="GO:0009245">
    <property type="term" value="P:lipid A biosynthetic process"/>
    <property type="evidence" value="ECO:0007669"/>
    <property type="project" value="TreeGrafter"/>
</dbReference>
<dbReference type="GO" id="GO:0009244">
    <property type="term" value="P:lipopolysaccharide core region biosynthetic process"/>
    <property type="evidence" value="ECO:0007669"/>
    <property type="project" value="UniProtKB-UniPathway"/>
</dbReference>
<dbReference type="Gene3D" id="3.40.50.11720">
    <property type="entry name" value="3-Deoxy-D-manno-octulosonic-acid transferase, N-terminal domain"/>
    <property type="match status" value="1"/>
</dbReference>
<dbReference type="Gene3D" id="3.40.50.2000">
    <property type="entry name" value="Glycogen Phosphorylase B"/>
    <property type="match status" value="1"/>
</dbReference>
<dbReference type="InterPro" id="IPR001296">
    <property type="entry name" value="Glyco_trans_1"/>
</dbReference>
<dbReference type="InterPro" id="IPR007507">
    <property type="entry name" value="Glycos_transf_N"/>
</dbReference>
<dbReference type="InterPro" id="IPR038107">
    <property type="entry name" value="Glycos_transf_N_sf"/>
</dbReference>
<dbReference type="InterPro" id="IPR039901">
    <property type="entry name" value="Kdotransferase"/>
</dbReference>
<dbReference type="PANTHER" id="PTHR42755:SF1">
    <property type="entry name" value="3-DEOXY-D-MANNO-OCTULOSONIC ACID TRANSFERASE, MITOCHONDRIAL-RELATED"/>
    <property type="match status" value="1"/>
</dbReference>
<dbReference type="PANTHER" id="PTHR42755">
    <property type="entry name" value="3-DEOXY-MANNO-OCTULOSONATE CYTIDYLYLTRANSFERASE"/>
    <property type="match status" value="1"/>
</dbReference>
<dbReference type="Pfam" id="PF00534">
    <property type="entry name" value="Glycos_transf_1"/>
    <property type="match status" value="1"/>
</dbReference>
<dbReference type="Pfam" id="PF04413">
    <property type="entry name" value="Glycos_transf_N"/>
    <property type="match status" value="1"/>
</dbReference>
<dbReference type="SUPFAM" id="SSF53756">
    <property type="entry name" value="UDP-Glycosyltransferase/glycogen phosphorylase"/>
    <property type="match status" value="1"/>
</dbReference>
<evidence type="ECO:0000250" key="1"/>
<evidence type="ECO:0000269" key="2">
    <source>
    </source>
</evidence>
<evidence type="ECO:0000305" key="3"/>
<proteinExistence type="evidence at protein level"/>
<keyword id="KW-0997">Cell inner membrane</keyword>
<keyword id="KW-1003">Cell membrane</keyword>
<keyword id="KW-0448">Lipopolysaccharide biosynthesis</keyword>
<keyword id="KW-0472">Membrane</keyword>
<keyword id="KW-0808">Transferase</keyword>
<accession>Q45374</accession>
<comment type="function">
    <text evidence="2">Involved in lipopolysaccharide (LPS) biosynthesis. Catalyzes the transfer of a single 3-deoxy-D-manno-octulosonate (Kdo) residue from CMP-Kdo to lipid IV(A), the tetraacyldisaccharide-1,4'-bisphosphate precursor of lipid A.</text>
</comment>
<comment type="catalytic activity">
    <reaction evidence="2">
        <text>lipid IVA (E. coli) + CMP-3-deoxy-beta-D-manno-octulosonate = alpha-Kdo-(2-&gt;6)-lipid IVA (E. coli) + CMP + H(+)</text>
        <dbReference type="Rhea" id="RHEA:28066"/>
        <dbReference type="ChEBI" id="CHEBI:15378"/>
        <dbReference type="ChEBI" id="CHEBI:58603"/>
        <dbReference type="ChEBI" id="CHEBI:60364"/>
        <dbReference type="ChEBI" id="CHEBI:60377"/>
        <dbReference type="ChEBI" id="CHEBI:85987"/>
        <dbReference type="EC" id="2.4.99.12"/>
    </reaction>
</comment>
<comment type="pathway">
    <text>Bacterial outer membrane biogenesis; LPS core biosynthesis.</text>
</comment>
<comment type="subcellular location">
    <subcellularLocation>
        <location evidence="1">Cell inner membrane</location>
        <topology evidence="1">Peripheral membrane protein</topology>
        <orientation evidence="1">Cytoplasmic side</orientation>
    </subcellularLocation>
</comment>
<comment type="similarity">
    <text evidence="3">Belongs to the glycosyltransferase group 1 family. Glycosyltransferase 30 subfamily.</text>
</comment>
<protein>
    <recommendedName>
        <fullName>3-deoxy-D-manno-octulosonic acid transferase</fullName>
        <shortName>Kdo transferase</shortName>
        <ecNumber evidence="2">2.4.99.12</ecNumber>
    </recommendedName>
    <alternativeName>
        <fullName>Lipid IV(A) 3-deoxy-D-manno-octulosonic acid transferase</fullName>
    </alternativeName>
    <alternativeName>
        <fullName>Monofunctional Kdo transferase</fullName>
    </alternativeName>
</protein>
<reference key="1">
    <citation type="journal article" date="1996" name="Mol. Microbiol.">
        <title>The identification, cloning and mutagenesis of a genetic locus required for lipopolysaccharide biosynthesis in Bordetella pertussis.</title>
        <authorList>
            <person name="Allen A.G."/>
            <person name="Maskell D.J."/>
        </authorList>
    </citation>
    <scope>NUCLEOTIDE SEQUENCE [GENOMIC DNA]</scope>
    <source>
        <strain>BP536</strain>
    </source>
</reference>
<reference key="2">
    <citation type="journal article" date="1999" name="J. Bacteriol.">
        <title>Bordetella pertussis waaA encodes a monofunctional 2-keto-3-deoxy-D-manno-octulosonic acid transferase that can complement an Escherichia coli waaA mutation.</title>
        <authorList>
            <person name="Isobe T."/>
            <person name="White K.A."/>
            <person name="Allen A.G."/>
            <person name="Peacock M."/>
            <person name="Raetz C.R."/>
            <person name="Maskell D.J."/>
        </authorList>
    </citation>
    <scope>FUNCTION</scope>
    <scope>CATALYTIC ACTIVITY</scope>
    <source>
        <strain>BP536</strain>
    </source>
</reference>
<feature type="chain" id="PRO_0000419172" description="3-deoxy-D-manno-octulosonic acid transferase">
    <location>
        <begin position="1"/>
        <end position="428"/>
    </location>
</feature>
<feature type="active site" description="Proton acceptor" evidence="1">
    <location>
        <position position="64"/>
    </location>
</feature>
<feature type="binding site" evidence="1">
    <location>
        <begin position="274"/>
        <end position="275"/>
    </location>
    <ligand>
        <name>CMP</name>
        <dbReference type="ChEBI" id="CHEBI:60377"/>
    </ligand>
</feature>
<feature type="binding site" evidence="1">
    <location>
        <begin position="316"/>
        <end position="318"/>
    </location>
    <ligand>
        <name>CMP</name>
        <dbReference type="ChEBI" id="CHEBI:60377"/>
    </ligand>
</feature>
<feature type="binding site" evidence="1">
    <location>
        <begin position="342"/>
        <end position="345"/>
    </location>
    <ligand>
        <name>CMP</name>
        <dbReference type="ChEBI" id="CHEBI:60377"/>
    </ligand>
</feature>
<feature type="site" description="Transition state stabilizer" evidence="1">
    <location>
        <position position="137"/>
    </location>
</feature>
<feature type="site" description="Transition state stabilizer" evidence="1">
    <location>
        <position position="213"/>
    </location>
</feature>